<protein>
    <recommendedName>
        <fullName>Cadherin-17</fullName>
    </recommendedName>
    <alternativeName>
        <fullName>BILL-cadherin</fullName>
    </alternativeName>
    <alternativeName>
        <fullName>Liver-intestine cadherin</fullName>
        <shortName>LI-cadherin</shortName>
    </alternativeName>
    <alternativeName>
        <fullName>P130</fullName>
    </alternativeName>
</protein>
<organism>
    <name type="scientific">Mus musculus</name>
    <name type="common">Mouse</name>
    <dbReference type="NCBI Taxonomy" id="10090"/>
    <lineage>
        <taxon>Eukaryota</taxon>
        <taxon>Metazoa</taxon>
        <taxon>Chordata</taxon>
        <taxon>Craniata</taxon>
        <taxon>Vertebrata</taxon>
        <taxon>Euteleostomi</taxon>
        <taxon>Mammalia</taxon>
        <taxon>Eutheria</taxon>
        <taxon>Euarchontoglires</taxon>
        <taxon>Glires</taxon>
        <taxon>Rodentia</taxon>
        <taxon>Myomorpha</taxon>
        <taxon>Muroidea</taxon>
        <taxon>Muridae</taxon>
        <taxon>Murinae</taxon>
        <taxon>Mus</taxon>
        <taxon>Mus</taxon>
    </lineage>
</organism>
<keyword id="KW-0106">Calcium</keyword>
<keyword id="KW-0130">Cell adhesion</keyword>
<keyword id="KW-1003">Cell membrane</keyword>
<keyword id="KW-0903">Direct protein sequencing</keyword>
<keyword id="KW-0325">Glycoprotein</keyword>
<keyword id="KW-0472">Membrane</keyword>
<keyword id="KW-0479">Metal-binding</keyword>
<keyword id="KW-1185">Reference proteome</keyword>
<keyword id="KW-0677">Repeat</keyword>
<keyword id="KW-0732">Signal</keyword>
<keyword id="KW-0812">Transmembrane</keyword>
<keyword id="KW-1133">Transmembrane helix</keyword>
<keyword id="KW-0813">Transport</keyword>
<dbReference type="EMBL" id="AF177669">
    <property type="protein sequence ID" value="AAD51125.1"/>
    <property type="molecule type" value="mRNA"/>
</dbReference>
<dbReference type="EMBL" id="D87912">
    <property type="protein sequence ID" value="BAB03264.1"/>
    <property type="molecule type" value="mRNA"/>
</dbReference>
<dbReference type="EMBL" id="BC042891">
    <property type="protein sequence ID" value="AAH42891.1"/>
    <property type="molecule type" value="mRNA"/>
</dbReference>
<dbReference type="CCDS" id="CCDS17972.1"/>
<dbReference type="RefSeq" id="NP_062727.1">
    <property type="nucleotide sequence ID" value="NM_019753.4"/>
</dbReference>
<dbReference type="RefSeq" id="XP_006537646.1">
    <property type="nucleotide sequence ID" value="XM_006537583.3"/>
</dbReference>
<dbReference type="RefSeq" id="XP_006537647.1">
    <property type="nucleotide sequence ID" value="XM_006537584.4"/>
</dbReference>
<dbReference type="SMR" id="Q9R100"/>
<dbReference type="BioGRID" id="198636">
    <property type="interactions" value="4"/>
</dbReference>
<dbReference type="FunCoup" id="Q9R100">
    <property type="interactions" value="127"/>
</dbReference>
<dbReference type="IntAct" id="Q9R100">
    <property type="interactions" value="1"/>
</dbReference>
<dbReference type="STRING" id="10090.ENSMUSP00000029871"/>
<dbReference type="GlyCosmos" id="Q9R100">
    <property type="glycosylation" value="7 sites, No reported glycans"/>
</dbReference>
<dbReference type="GlyGen" id="Q9R100">
    <property type="glycosylation" value="7 sites, 1 N-linked glycan (1 site)"/>
</dbReference>
<dbReference type="iPTMnet" id="Q9R100"/>
<dbReference type="PhosphoSitePlus" id="Q9R100"/>
<dbReference type="PaxDb" id="10090-ENSMUSP00000029871"/>
<dbReference type="ProteomicsDB" id="281742"/>
<dbReference type="Antibodypedia" id="12841">
    <property type="antibodies" value="621 antibodies from 44 providers"/>
</dbReference>
<dbReference type="DNASU" id="12557"/>
<dbReference type="Ensembl" id="ENSMUST00000029871.12">
    <property type="protein sequence ID" value="ENSMUSP00000029871.6"/>
    <property type="gene ID" value="ENSMUSG00000028217.12"/>
</dbReference>
<dbReference type="GeneID" id="12557"/>
<dbReference type="KEGG" id="mmu:12557"/>
<dbReference type="UCSC" id="uc008rzy.2">
    <property type="organism name" value="mouse"/>
</dbReference>
<dbReference type="AGR" id="MGI:1095414"/>
<dbReference type="CTD" id="1015"/>
<dbReference type="MGI" id="MGI:1095414">
    <property type="gene designation" value="Cdh17"/>
</dbReference>
<dbReference type="VEuPathDB" id="HostDB:ENSMUSG00000028217"/>
<dbReference type="eggNOG" id="KOG3594">
    <property type="taxonomic scope" value="Eukaryota"/>
</dbReference>
<dbReference type="GeneTree" id="ENSGT00940000157655"/>
<dbReference type="HOGENOM" id="CLU_016170_0_0_1"/>
<dbReference type="InParanoid" id="Q9R100"/>
<dbReference type="OMA" id="DVNNEMP"/>
<dbReference type="OrthoDB" id="9946173at2759"/>
<dbReference type="PhylomeDB" id="Q9R100"/>
<dbReference type="TreeFam" id="TF316817"/>
<dbReference type="Reactome" id="R-MMU-418990">
    <property type="pathway name" value="Adherens junctions interactions"/>
</dbReference>
<dbReference type="BioGRID-ORCS" id="12557">
    <property type="hits" value="2 hits in 77 CRISPR screens"/>
</dbReference>
<dbReference type="PRO" id="PR:Q9R100"/>
<dbReference type="Proteomes" id="UP000000589">
    <property type="component" value="Chromosome 4"/>
</dbReference>
<dbReference type="RNAct" id="Q9R100">
    <property type="molecule type" value="protein"/>
</dbReference>
<dbReference type="Bgee" id="ENSMUSG00000028217">
    <property type="expression patterns" value="Expressed in small intestine Peyer's patch and 43 other cell types or tissues"/>
</dbReference>
<dbReference type="ExpressionAtlas" id="Q9R100">
    <property type="expression patterns" value="baseline and differential"/>
</dbReference>
<dbReference type="GO" id="GO:0016323">
    <property type="term" value="C:basolateral plasma membrane"/>
    <property type="evidence" value="ECO:0000250"/>
    <property type="project" value="CAFA"/>
</dbReference>
<dbReference type="GO" id="GO:0030054">
    <property type="term" value="C:cell junction"/>
    <property type="evidence" value="ECO:0007669"/>
    <property type="project" value="Ensembl"/>
</dbReference>
<dbReference type="GO" id="GO:0009986">
    <property type="term" value="C:cell surface"/>
    <property type="evidence" value="ECO:0000314"/>
    <property type="project" value="UniProtKB"/>
</dbReference>
<dbReference type="GO" id="GO:0005654">
    <property type="term" value="C:nucleoplasm"/>
    <property type="evidence" value="ECO:0007669"/>
    <property type="project" value="Ensembl"/>
</dbReference>
<dbReference type="GO" id="GO:0005886">
    <property type="term" value="C:plasma membrane"/>
    <property type="evidence" value="ECO:0000314"/>
    <property type="project" value="MGI"/>
</dbReference>
<dbReference type="GO" id="GO:0005509">
    <property type="term" value="F:calcium ion binding"/>
    <property type="evidence" value="ECO:0007669"/>
    <property type="project" value="InterPro"/>
</dbReference>
<dbReference type="GO" id="GO:0005178">
    <property type="term" value="F:integrin binding"/>
    <property type="evidence" value="ECO:0007669"/>
    <property type="project" value="Ensembl"/>
</dbReference>
<dbReference type="GO" id="GO:0005427">
    <property type="term" value="F:proton-dependent oligopeptide secondary active transmembrane transporter activity"/>
    <property type="evidence" value="ECO:0000314"/>
    <property type="project" value="MGI"/>
</dbReference>
<dbReference type="GO" id="GO:0030183">
    <property type="term" value="P:B cell differentiation"/>
    <property type="evidence" value="ECO:0000315"/>
    <property type="project" value="UniProtKB"/>
</dbReference>
<dbReference type="GO" id="GO:0016339">
    <property type="term" value="P:calcium-dependent cell-cell adhesion via plasma membrane cell adhesion molecules"/>
    <property type="evidence" value="ECO:0000314"/>
    <property type="project" value="MGI"/>
</dbReference>
<dbReference type="GO" id="GO:0002314">
    <property type="term" value="P:germinal center B cell differentiation"/>
    <property type="evidence" value="ECO:0000315"/>
    <property type="project" value="UniProtKB"/>
</dbReference>
<dbReference type="GO" id="GO:0007156">
    <property type="term" value="P:homophilic cell adhesion via plasma membrane adhesion molecules"/>
    <property type="evidence" value="ECO:0000314"/>
    <property type="project" value="MGI"/>
</dbReference>
<dbReference type="GO" id="GO:0007229">
    <property type="term" value="P:integrin-mediated signaling pathway"/>
    <property type="evidence" value="ECO:0007669"/>
    <property type="project" value="Ensembl"/>
</dbReference>
<dbReference type="GO" id="GO:0002315">
    <property type="term" value="P:marginal zone B cell differentiation"/>
    <property type="evidence" value="ECO:0000315"/>
    <property type="project" value="UniProtKB"/>
</dbReference>
<dbReference type="GO" id="GO:0006857">
    <property type="term" value="P:oligopeptide transport"/>
    <property type="evidence" value="ECO:0000314"/>
    <property type="project" value="MGI"/>
</dbReference>
<dbReference type="GO" id="GO:0033626">
    <property type="term" value="P:positive regulation of integrin activation by cell surface receptor linked signal transduction"/>
    <property type="evidence" value="ECO:0007669"/>
    <property type="project" value="Ensembl"/>
</dbReference>
<dbReference type="GO" id="GO:0048536">
    <property type="term" value="P:spleen development"/>
    <property type="evidence" value="ECO:0000315"/>
    <property type="project" value="UniProtKB"/>
</dbReference>
<dbReference type="CDD" id="cd11304">
    <property type="entry name" value="Cadherin_repeat"/>
    <property type="match status" value="6"/>
</dbReference>
<dbReference type="FunFam" id="2.60.40.60:FF:000151">
    <property type="entry name" value="Cadherin 17"/>
    <property type="match status" value="1"/>
</dbReference>
<dbReference type="FunFam" id="2.60.40.60:FF:000152">
    <property type="entry name" value="Cadherin 17"/>
    <property type="match status" value="1"/>
</dbReference>
<dbReference type="FunFam" id="2.60.40.60:FF:000163">
    <property type="entry name" value="Cadherin 17"/>
    <property type="match status" value="1"/>
</dbReference>
<dbReference type="FunFam" id="2.60.40.60:FF:000169">
    <property type="entry name" value="Cadherin 17"/>
    <property type="match status" value="1"/>
</dbReference>
<dbReference type="FunFam" id="2.60.40.60:FF:000183">
    <property type="entry name" value="Cadherin 17"/>
    <property type="match status" value="1"/>
</dbReference>
<dbReference type="FunFam" id="2.60.40.60:FF:000188">
    <property type="entry name" value="Cadherin 17"/>
    <property type="match status" value="1"/>
</dbReference>
<dbReference type="FunFam" id="2.60.40.60:FF:000212">
    <property type="entry name" value="Cadherin 17"/>
    <property type="match status" value="1"/>
</dbReference>
<dbReference type="Gene3D" id="2.60.40.60">
    <property type="entry name" value="Cadherins"/>
    <property type="match status" value="7"/>
</dbReference>
<dbReference type="InterPro" id="IPR039808">
    <property type="entry name" value="Cadherin"/>
</dbReference>
<dbReference type="InterPro" id="IPR002126">
    <property type="entry name" value="Cadherin-like_dom"/>
</dbReference>
<dbReference type="InterPro" id="IPR015919">
    <property type="entry name" value="Cadherin-like_sf"/>
</dbReference>
<dbReference type="InterPro" id="IPR020894">
    <property type="entry name" value="Cadherin_CS"/>
</dbReference>
<dbReference type="PANTHER" id="PTHR24027:SF419">
    <property type="entry name" value="CADHERIN-17"/>
    <property type="match status" value="1"/>
</dbReference>
<dbReference type="PANTHER" id="PTHR24027">
    <property type="entry name" value="CADHERIN-23"/>
    <property type="match status" value="1"/>
</dbReference>
<dbReference type="Pfam" id="PF00028">
    <property type="entry name" value="Cadherin"/>
    <property type="match status" value="5"/>
</dbReference>
<dbReference type="PRINTS" id="PR00205">
    <property type="entry name" value="CADHERIN"/>
</dbReference>
<dbReference type="SMART" id="SM00112">
    <property type="entry name" value="CA"/>
    <property type="match status" value="6"/>
</dbReference>
<dbReference type="SUPFAM" id="SSF49313">
    <property type="entry name" value="Cadherin-like"/>
    <property type="match status" value="7"/>
</dbReference>
<dbReference type="PROSITE" id="PS00232">
    <property type="entry name" value="CADHERIN_1"/>
    <property type="match status" value="3"/>
</dbReference>
<dbReference type="PROSITE" id="PS50268">
    <property type="entry name" value="CADHERIN_2"/>
    <property type="match status" value="5"/>
</dbReference>
<reference key="1">
    <citation type="journal article" date="2001" name="Dev. Dyn.">
        <title>LI-cadherin gene expression during mouse intestinal development.</title>
        <authorList>
            <person name="Angres B."/>
            <person name="Kim L."/>
            <person name="Jung R."/>
            <person name="Gessner R."/>
            <person name="Tauber R."/>
        </authorList>
    </citation>
    <scope>NUCLEOTIDE SEQUENCE [MRNA]</scope>
    <source>
        <strain>Swiss Webster</strain>
        <tissue>Intestine</tissue>
    </source>
</reference>
<reference key="2">
    <citation type="journal article" date="2000" name="J. Biol. Chem.">
        <title>The identification of a nonclassical cadherin expressed during B cell development and its interaction with surrogate light chain.</title>
        <authorList>
            <person name="Ohnishi K."/>
            <person name="Shimizu T."/>
            <person name="Karasuyama H."/>
            <person name="Melchers F."/>
        </authorList>
    </citation>
    <scope>NUCLEOTIDE SEQUENCE [MRNA]</scope>
    <scope>PROTEIN SEQUENCE OF 26-33; 52-58; 74-81; 117-123 AND 490-509</scope>
    <scope>TISSUE SPECIFICITY</scope>
    <scope>DEVELOPMENTAL STAGE</scope>
    <source>
        <strain>BALB/cJ</strain>
        <tissue>Fetal liver</tissue>
    </source>
</reference>
<reference key="3">
    <citation type="journal article" date="2004" name="Genome Res.">
        <title>The status, quality, and expansion of the NIH full-length cDNA project: the Mammalian Gene Collection (MGC).</title>
        <authorList>
            <consortium name="The MGC Project Team"/>
        </authorList>
    </citation>
    <scope>NUCLEOTIDE SEQUENCE [LARGE SCALE MRNA]</scope>
    <source>
        <strain>FVB/N</strain>
        <tissue>Colon</tissue>
    </source>
</reference>
<evidence type="ECO:0000250" key="1"/>
<evidence type="ECO:0000255" key="2"/>
<evidence type="ECO:0000255" key="3">
    <source>
        <dbReference type="PROSITE-ProRule" id="PRU00043"/>
    </source>
</evidence>
<evidence type="ECO:0000269" key="4">
    <source>
    </source>
</evidence>
<evidence type="ECO:0000305" key="5"/>
<feature type="signal peptide" evidence="4">
    <location>
        <begin position="1"/>
        <end position="25"/>
    </location>
</feature>
<feature type="chain" id="PRO_0000003813" description="Cadherin-17">
    <location>
        <begin position="26"/>
        <end position="827"/>
    </location>
</feature>
<feature type="topological domain" description="Extracellular" evidence="2">
    <location>
        <begin position="26"/>
        <end position="786"/>
    </location>
</feature>
<feature type="transmembrane region" description="Helical" evidence="2">
    <location>
        <begin position="787"/>
        <end position="807"/>
    </location>
</feature>
<feature type="topological domain" description="Cytoplasmic" evidence="2">
    <location>
        <begin position="808"/>
        <end position="827"/>
    </location>
</feature>
<feature type="domain" description="Cadherin 1" evidence="3">
    <location>
        <begin position="29"/>
        <end position="127"/>
    </location>
</feature>
<feature type="domain" description="Cadherin 2" evidence="3">
    <location>
        <begin position="128"/>
        <end position="243"/>
    </location>
</feature>
<feature type="domain" description="Cadherin 3" evidence="3">
    <location>
        <begin position="244"/>
        <end position="339"/>
    </location>
</feature>
<feature type="domain" description="Cadherin 4" evidence="3">
    <location>
        <begin position="340"/>
        <end position="448"/>
    </location>
</feature>
<feature type="domain" description="Cadherin 5" evidence="3">
    <location>
        <begin position="449"/>
        <end position="565"/>
    </location>
</feature>
<feature type="domain" description="Cadherin 6" evidence="3">
    <location>
        <begin position="566"/>
        <end position="666"/>
    </location>
</feature>
<feature type="domain" description="Cadherin 7" evidence="3">
    <location>
        <begin position="667"/>
        <end position="776"/>
    </location>
</feature>
<feature type="glycosylation site" description="N-linked (GlcNAc...) asparagine" evidence="2">
    <location>
        <position position="148"/>
    </location>
</feature>
<feature type="glycosylation site" description="N-linked (GlcNAc...) asparagine" evidence="2">
    <location>
        <position position="249"/>
    </location>
</feature>
<feature type="glycosylation site" description="N-linked (GlcNAc...) asparagine" evidence="2">
    <location>
        <position position="418"/>
    </location>
</feature>
<feature type="glycosylation site" description="N-linked (GlcNAc...) asparagine" evidence="2">
    <location>
        <position position="545"/>
    </location>
</feature>
<feature type="glycosylation site" description="N-linked (GlcNAc...) asparagine" evidence="2">
    <location>
        <position position="573"/>
    </location>
</feature>
<feature type="glycosylation site" description="N-linked (GlcNAc...) asparagine" evidence="2">
    <location>
        <position position="586"/>
    </location>
</feature>
<feature type="glycosylation site" description="N-linked (GlcNAc...) asparagine" evidence="2">
    <location>
        <position position="721"/>
    </location>
</feature>
<comment type="function">
    <text>Cadherins are calcium-dependent cell adhesion proteins. They preferentially interact with themselves in a homophilic manner in connecting cells; cadherins may thus contribute to the sorting of heterogeneous cell types. LI-cadherin may have a role in the morphological organization of liver and intestine.</text>
</comment>
<comment type="subcellular location">
    <subcellularLocation>
        <location evidence="5">Cell membrane</location>
        <topology evidence="5">Single-pass type I membrane protein</topology>
    </subcellularLocation>
</comment>
<comment type="tissue specificity">
    <text evidence="4">Highest expression is found in intestine with lower expression in spleen, bone marrow, lung and testis. No expression detected in liver, kidney, heart, brain or skeletal muscle. Expressed in precursor B-cells and myeloid cells.</text>
</comment>
<comment type="developmental stage">
    <text evidence="4">Expression increases in pro- and pre-B-I cells, decreases in large and small pre-B-II cells, and increases again in immature and mature B-cells.</text>
</comment>
<comment type="domain">
    <text evidence="1">Three calcium ions are usually bound at the interface of each cadherin domain and rigidify the connections, imparting a strong curvature to the full-length ectodomain.</text>
</comment>
<name>CAD17_MOUSE</name>
<proteinExistence type="evidence at protein level"/>
<accession>Q9R100</accession>
<gene>
    <name type="primary">Cdh17</name>
</gene>
<sequence>MVSAQLHFLCLLTLYLTCGYGEEGKFSGPLKPMTFSIFEGQEPSQVIFQFKTNPPAVTFELTGETDGIFKIEKDGLLYHTRALDRETRAVHHLQLAALDSHGAIVDGPVPITIEVKDINDNRPTFLQSKYEGSVRQNSRPGKPFMYVNATDLDDPATPNGQLFYQIVIQLPQINDVMYFQIDSKTGAISLTPEGSQELDPVKNPSYNLVVSVKDMGGQSENSFSDTTYVDISIRENIWKAPEPVEIRENSTDPHPIKITQVQWNDPGAQYSLVNKEKLSPFPFSIDQEGNIYVTQALDREEKNSHVFFATAKDENGKPLAYPLEIYVKVIDINDNPPTCLSPVTVFEVQENEPLGNSIGIFEAHDMDEANNINSILKYKLVDQTPKVPSDGLFLIGEYEGKVQLSKQSLKKQDSPQYNLSIEVSDVDFKTLCYIQVNVIDINDQIPIFETSNYGSKTLSEDTAIGSTILIIQATDADEPFTGSSKILYKIVQGDTEGRLEVVTDPTTNAGYVKIKKPLDFETQPVSSIVFQAENPEPLVKGIEYNASSFASFELIVTDVNEVPVFPQRIFQANVSEDAAVGSRVGNVTARDPEGLTVSYSLKGNMRGWLKIDSVTGEIFSAAPLDRETESVYRVQVVATEVGGSSLSSTADFHLVLTDVNDNPPRLAKDYTGLFFCHPLSAPGSLIFEVTDDDQQSLRRPKFTFALGREGLQSDWEVSKINGTHARLSTRHTRFEEQVYNIPIRINDGGQPPMEGTVFLPVTFCQCVEGSCFRPAGRQDGIPTVGMAVGILLTTFLVIGIILAVVFIRMRKDKVENPQSPENKPLRS</sequence>